<gene>
    <name evidence="1" type="primary">truB</name>
    <name type="ordered locus">EcHS_A3358</name>
</gene>
<organism>
    <name type="scientific">Escherichia coli O9:H4 (strain HS)</name>
    <dbReference type="NCBI Taxonomy" id="331112"/>
    <lineage>
        <taxon>Bacteria</taxon>
        <taxon>Pseudomonadati</taxon>
        <taxon>Pseudomonadota</taxon>
        <taxon>Gammaproteobacteria</taxon>
        <taxon>Enterobacterales</taxon>
        <taxon>Enterobacteriaceae</taxon>
        <taxon>Escherichia</taxon>
    </lineage>
</organism>
<dbReference type="EC" id="5.4.99.25" evidence="1"/>
<dbReference type="EMBL" id="CP000802">
    <property type="protein sequence ID" value="ABV07586.1"/>
    <property type="molecule type" value="Genomic_DNA"/>
</dbReference>
<dbReference type="RefSeq" id="WP_000089698.1">
    <property type="nucleotide sequence ID" value="NC_009800.1"/>
</dbReference>
<dbReference type="SMR" id="A8A4Y2"/>
<dbReference type="GeneID" id="93778817"/>
<dbReference type="KEGG" id="ecx:EcHS_A3358"/>
<dbReference type="HOGENOM" id="CLU_032087_0_3_6"/>
<dbReference type="GO" id="GO:0003723">
    <property type="term" value="F:RNA binding"/>
    <property type="evidence" value="ECO:0007669"/>
    <property type="project" value="InterPro"/>
</dbReference>
<dbReference type="GO" id="GO:0160148">
    <property type="term" value="F:tRNA pseudouridine(55) synthase activity"/>
    <property type="evidence" value="ECO:0007669"/>
    <property type="project" value="UniProtKB-EC"/>
</dbReference>
<dbReference type="GO" id="GO:1990481">
    <property type="term" value="P:mRNA pseudouridine synthesis"/>
    <property type="evidence" value="ECO:0007669"/>
    <property type="project" value="TreeGrafter"/>
</dbReference>
<dbReference type="GO" id="GO:0031119">
    <property type="term" value="P:tRNA pseudouridine synthesis"/>
    <property type="evidence" value="ECO:0007669"/>
    <property type="project" value="UniProtKB-UniRule"/>
</dbReference>
<dbReference type="CDD" id="cd02573">
    <property type="entry name" value="PseudoU_synth_EcTruB"/>
    <property type="match status" value="1"/>
</dbReference>
<dbReference type="CDD" id="cd21152">
    <property type="entry name" value="PUA_TruB_bacterial"/>
    <property type="match status" value="1"/>
</dbReference>
<dbReference type="FunFam" id="2.30.130.10:FF:000004">
    <property type="entry name" value="tRNA pseudouridine synthase B"/>
    <property type="match status" value="1"/>
</dbReference>
<dbReference type="FunFam" id="3.30.2350.10:FF:000003">
    <property type="entry name" value="tRNA pseudouridine synthase B"/>
    <property type="match status" value="1"/>
</dbReference>
<dbReference type="Gene3D" id="3.30.2350.10">
    <property type="entry name" value="Pseudouridine synthase"/>
    <property type="match status" value="1"/>
</dbReference>
<dbReference type="Gene3D" id="2.30.130.10">
    <property type="entry name" value="PUA domain"/>
    <property type="match status" value="1"/>
</dbReference>
<dbReference type="HAMAP" id="MF_01080">
    <property type="entry name" value="TruB_bact"/>
    <property type="match status" value="1"/>
</dbReference>
<dbReference type="InterPro" id="IPR020103">
    <property type="entry name" value="PsdUridine_synth_cat_dom_sf"/>
</dbReference>
<dbReference type="InterPro" id="IPR002501">
    <property type="entry name" value="PsdUridine_synth_N"/>
</dbReference>
<dbReference type="InterPro" id="IPR015947">
    <property type="entry name" value="PUA-like_sf"/>
</dbReference>
<dbReference type="InterPro" id="IPR036974">
    <property type="entry name" value="PUA_sf"/>
</dbReference>
<dbReference type="InterPro" id="IPR014780">
    <property type="entry name" value="tRNA_psdUridine_synth_TruB"/>
</dbReference>
<dbReference type="InterPro" id="IPR015240">
    <property type="entry name" value="tRNA_sdUridine_synth_fam1_C"/>
</dbReference>
<dbReference type="InterPro" id="IPR032819">
    <property type="entry name" value="TruB_C"/>
</dbReference>
<dbReference type="NCBIfam" id="TIGR00431">
    <property type="entry name" value="TruB"/>
    <property type="match status" value="1"/>
</dbReference>
<dbReference type="PANTHER" id="PTHR13767:SF2">
    <property type="entry name" value="PSEUDOURIDYLATE SYNTHASE TRUB1"/>
    <property type="match status" value="1"/>
</dbReference>
<dbReference type="PANTHER" id="PTHR13767">
    <property type="entry name" value="TRNA-PSEUDOURIDINE SYNTHASE"/>
    <property type="match status" value="1"/>
</dbReference>
<dbReference type="Pfam" id="PF09157">
    <property type="entry name" value="TruB-C_2"/>
    <property type="match status" value="1"/>
</dbReference>
<dbReference type="Pfam" id="PF16198">
    <property type="entry name" value="TruB_C_2"/>
    <property type="match status" value="1"/>
</dbReference>
<dbReference type="Pfam" id="PF01509">
    <property type="entry name" value="TruB_N"/>
    <property type="match status" value="1"/>
</dbReference>
<dbReference type="SUPFAM" id="SSF55120">
    <property type="entry name" value="Pseudouridine synthase"/>
    <property type="match status" value="1"/>
</dbReference>
<dbReference type="SUPFAM" id="SSF88697">
    <property type="entry name" value="PUA domain-like"/>
    <property type="match status" value="1"/>
</dbReference>
<feature type="chain" id="PRO_1000084584" description="tRNA pseudouridine synthase B">
    <location>
        <begin position="1"/>
        <end position="314"/>
    </location>
</feature>
<feature type="active site" description="Nucleophile" evidence="1">
    <location>
        <position position="48"/>
    </location>
</feature>
<feature type="binding site" evidence="1">
    <location>
        <position position="43"/>
    </location>
    <ligand>
        <name>substrate</name>
    </ligand>
</feature>
<feature type="binding site" evidence="1">
    <location>
        <position position="76"/>
    </location>
    <ligand>
        <name>substrate</name>
    </ligand>
</feature>
<feature type="binding site" evidence="1">
    <location>
        <position position="179"/>
    </location>
    <ligand>
        <name>substrate</name>
    </ligand>
</feature>
<feature type="binding site" evidence="1">
    <location>
        <position position="200"/>
    </location>
    <ligand>
        <name>substrate</name>
    </ligand>
</feature>
<proteinExistence type="inferred from homology"/>
<sequence length="314" mass="35087">MSRPRRRGRDINGVLLLDKPQGMSSNDALQKVKRIYNANRAGHTGALDPLATGMLPICLGEATKFSQYLLDSDKRYRVIARLGQRTDTSDADGQIVEERPVTFSAEQLAAALDTFRGDIEQIPSMYSALKYQGKKLYEYARQGIEVPREARPITVYELLFIRHEGNELELEIHCSKGTYIRTIIDDLGEKLGCGAHVIYLRRLAVSKYPVERMVTLEHLRELVEQAEQQDIPAAELLDPLLMPMDSPASDYPVVNLPLTSSVYFKNGNPVRTSGAPLEGLVRVTEGENGKFIGMGEIDDEGRVAPRRLVVEYPA</sequence>
<accession>A8A4Y2</accession>
<evidence type="ECO:0000255" key="1">
    <source>
        <dbReference type="HAMAP-Rule" id="MF_01080"/>
    </source>
</evidence>
<keyword id="KW-0413">Isomerase</keyword>
<keyword id="KW-0819">tRNA processing</keyword>
<comment type="function">
    <text evidence="1">Responsible for synthesis of pseudouridine from uracil-55 in the psi GC loop of transfer RNAs.</text>
</comment>
<comment type="catalytic activity">
    <reaction evidence="1">
        <text>uridine(55) in tRNA = pseudouridine(55) in tRNA</text>
        <dbReference type="Rhea" id="RHEA:42532"/>
        <dbReference type="Rhea" id="RHEA-COMP:10101"/>
        <dbReference type="Rhea" id="RHEA-COMP:10102"/>
        <dbReference type="ChEBI" id="CHEBI:65314"/>
        <dbReference type="ChEBI" id="CHEBI:65315"/>
        <dbReference type="EC" id="5.4.99.25"/>
    </reaction>
</comment>
<comment type="similarity">
    <text evidence="1">Belongs to the pseudouridine synthase TruB family. Type 1 subfamily.</text>
</comment>
<name>TRUB_ECOHS</name>
<reference key="1">
    <citation type="journal article" date="2008" name="J. Bacteriol.">
        <title>The pangenome structure of Escherichia coli: comparative genomic analysis of E. coli commensal and pathogenic isolates.</title>
        <authorList>
            <person name="Rasko D.A."/>
            <person name="Rosovitz M.J."/>
            <person name="Myers G.S.A."/>
            <person name="Mongodin E.F."/>
            <person name="Fricke W.F."/>
            <person name="Gajer P."/>
            <person name="Crabtree J."/>
            <person name="Sebaihia M."/>
            <person name="Thomson N.R."/>
            <person name="Chaudhuri R."/>
            <person name="Henderson I.R."/>
            <person name="Sperandio V."/>
            <person name="Ravel J."/>
        </authorList>
    </citation>
    <scope>NUCLEOTIDE SEQUENCE [LARGE SCALE GENOMIC DNA]</scope>
    <source>
        <strain>HS</strain>
    </source>
</reference>
<protein>
    <recommendedName>
        <fullName evidence="1">tRNA pseudouridine synthase B</fullName>
        <ecNumber evidence="1">5.4.99.25</ecNumber>
    </recommendedName>
    <alternativeName>
        <fullName evidence="1">tRNA pseudouridine(55) synthase</fullName>
        <shortName evidence="1">Psi55 synthase</shortName>
    </alternativeName>
    <alternativeName>
        <fullName evidence="1">tRNA pseudouridylate synthase</fullName>
    </alternativeName>
    <alternativeName>
        <fullName evidence="1">tRNA-uridine isomerase</fullName>
    </alternativeName>
</protein>